<proteinExistence type="inferred from homology"/>
<reference key="1">
    <citation type="journal article" date="2009" name="J. Bacteriol.">
        <title>Complete and draft genome sequences of six members of the Aquificales.</title>
        <authorList>
            <person name="Reysenbach A.-L."/>
            <person name="Hamamura N."/>
            <person name="Podar M."/>
            <person name="Griffiths E."/>
            <person name="Ferreira S."/>
            <person name="Hochstein R."/>
            <person name="Heidelberg J."/>
            <person name="Johnson J."/>
            <person name="Mead D."/>
            <person name="Pohorille A."/>
            <person name="Sarmiento M."/>
            <person name="Schweighofer K."/>
            <person name="Seshadri R."/>
            <person name="Voytek M.A."/>
        </authorList>
    </citation>
    <scope>NUCLEOTIDE SEQUENCE [LARGE SCALE GENOMIC DNA]</scope>
    <source>
        <strain>Y04AAS1</strain>
    </source>
</reference>
<keyword id="KW-0378">Hydrolase</keyword>
<keyword id="KW-0546">Nucleotide metabolism</keyword>
<keyword id="KW-0547">Nucleotide-binding</keyword>
<comment type="function">
    <text evidence="1">Bifunctional enzyme that catalyzes both the deamination of dCTP to dUTP and the hydrolysis of dUTP to dUMP without releasing the toxic dUTP intermediate.</text>
</comment>
<comment type="catalytic activity">
    <reaction evidence="1">
        <text>dCTP + 2 H2O = dUMP + NH4(+) + diphosphate</text>
        <dbReference type="Rhea" id="RHEA:19205"/>
        <dbReference type="ChEBI" id="CHEBI:15377"/>
        <dbReference type="ChEBI" id="CHEBI:28938"/>
        <dbReference type="ChEBI" id="CHEBI:33019"/>
        <dbReference type="ChEBI" id="CHEBI:61481"/>
        <dbReference type="ChEBI" id="CHEBI:246422"/>
        <dbReference type="EC" id="3.5.4.30"/>
    </reaction>
</comment>
<comment type="pathway">
    <text evidence="1">Pyrimidine metabolism; dUMP biosynthesis; dUMP from dCTP: step 1/1.</text>
</comment>
<comment type="subunit">
    <text evidence="1">Homotrimer.</text>
</comment>
<comment type="similarity">
    <text evidence="1">Belongs to the dCTP deaminase family.</text>
</comment>
<sequence length="177" mass="20186">MILSDKTILDYIKSSKIIVEPFDESSLQCSSLDLRLSNSIAFYEELDIIDIKSPIQAKTVTFEEYFIINPGEFLLASTMEYIKLPEFITAFVEGRSSLGRLGLFIENAGWVDAGFEGQITLELYNANKYPIKLYKGMRICQLVFAKLDEIPSKVYRGKYLCQKGATPSKIFMDFDKK</sequence>
<protein>
    <recommendedName>
        <fullName evidence="1">dCTP deaminase, dUMP-forming</fullName>
        <ecNumber evidence="1">3.5.4.30</ecNumber>
    </recommendedName>
    <alternativeName>
        <fullName evidence="1">Bifunctional dCTP deaminase:dUTPase</fullName>
    </alternativeName>
    <alternativeName>
        <fullName evidence="1">DCD-DUT</fullName>
    </alternativeName>
</protein>
<organism>
    <name type="scientific">Hydrogenobaculum sp. (strain Y04AAS1)</name>
    <dbReference type="NCBI Taxonomy" id="380749"/>
    <lineage>
        <taxon>Bacteria</taxon>
        <taxon>Pseudomonadati</taxon>
        <taxon>Aquificota</taxon>
        <taxon>Aquificia</taxon>
        <taxon>Aquificales</taxon>
        <taxon>Aquificaceae</taxon>
        <taxon>Hydrogenobaculum</taxon>
    </lineage>
</organism>
<evidence type="ECO:0000255" key="1">
    <source>
        <dbReference type="HAMAP-Rule" id="MF_00146"/>
    </source>
</evidence>
<gene>
    <name evidence="1" type="primary">dcd</name>
    <name type="ordered locus">HY04AAS1_0561</name>
</gene>
<accession>B4U7Y7</accession>
<dbReference type="EC" id="3.5.4.30" evidence="1"/>
<dbReference type="EMBL" id="CP001130">
    <property type="protein sequence ID" value="ACG57248.1"/>
    <property type="molecule type" value="Genomic_DNA"/>
</dbReference>
<dbReference type="RefSeq" id="WP_012513604.1">
    <property type="nucleotide sequence ID" value="NC_011126.1"/>
</dbReference>
<dbReference type="SMR" id="B4U7Y7"/>
<dbReference type="STRING" id="380749.HY04AAS1_0561"/>
<dbReference type="KEGG" id="hya:HY04AAS1_0561"/>
<dbReference type="eggNOG" id="COG0717">
    <property type="taxonomic scope" value="Bacteria"/>
</dbReference>
<dbReference type="HOGENOM" id="CLU_087476_2_1_0"/>
<dbReference type="OrthoDB" id="9780202at2"/>
<dbReference type="UniPathway" id="UPA00610">
    <property type="reaction ID" value="UER00667"/>
</dbReference>
<dbReference type="GO" id="GO:0033973">
    <property type="term" value="F:dCTP deaminase (dUMP-forming) activity"/>
    <property type="evidence" value="ECO:0007669"/>
    <property type="project" value="UniProtKB-UniRule"/>
</dbReference>
<dbReference type="GO" id="GO:0008829">
    <property type="term" value="F:dCTP deaminase activity"/>
    <property type="evidence" value="ECO:0007669"/>
    <property type="project" value="InterPro"/>
</dbReference>
<dbReference type="GO" id="GO:0000166">
    <property type="term" value="F:nucleotide binding"/>
    <property type="evidence" value="ECO:0007669"/>
    <property type="project" value="UniProtKB-KW"/>
</dbReference>
<dbReference type="GO" id="GO:0006226">
    <property type="term" value="P:dUMP biosynthetic process"/>
    <property type="evidence" value="ECO:0007669"/>
    <property type="project" value="UniProtKB-UniRule"/>
</dbReference>
<dbReference type="GO" id="GO:0006229">
    <property type="term" value="P:dUTP biosynthetic process"/>
    <property type="evidence" value="ECO:0007669"/>
    <property type="project" value="InterPro"/>
</dbReference>
<dbReference type="GO" id="GO:0015949">
    <property type="term" value="P:nucleobase-containing small molecule interconversion"/>
    <property type="evidence" value="ECO:0007669"/>
    <property type="project" value="TreeGrafter"/>
</dbReference>
<dbReference type="CDD" id="cd07557">
    <property type="entry name" value="trimeric_dUTPase"/>
    <property type="match status" value="1"/>
</dbReference>
<dbReference type="Gene3D" id="2.70.40.10">
    <property type="match status" value="1"/>
</dbReference>
<dbReference type="HAMAP" id="MF_00146">
    <property type="entry name" value="dCTP_deaminase"/>
    <property type="match status" value="1"/>
</dbReference>
<dbReference type="InterPro" id="IPR011962">
    <property type="entry name" value="dCTP_deaminase"/>
</dbReference>
<dbReference type="InterPro" id="IPR036157">
    <property type="entry name" value="dUTPase-like_sf"/>
</dbReference>
<dbReference type="InterPro" id="IPR033704">
    <property type="entry name" value="dUTPase_trimeric"/>
</dbReference>
<dbReference type="NCBIfam" id="TIGR02274">
    <property type="entry name" value="dCTP_deam"/>
    <property type="match status" value="1"/>
</dbReference>
<dbReference type="PANTHER" id="PTHR42680">
    <property type="entry name" value="DCTP DEAMINASE"/>
    <property type="match status" value="1"/>
</dbReference>
<dbReference type="PANTHER" id="PTHR42680:SF3">
    <property type="entry name" value="DCTP DEAMINASE"/>
    <property type="match status" value="1"/>
</dbReference>
<dbReference type="Pfam" id="PF22769">
    <property type="entry name" value="DCD"/>
    <property type="match status" value="1"/>
</dbReference>
<dbReference type="SUPFAM" id="SSF51283">
    <property type="entry name" value="dUTPase-like"/>
    <property type="match status" value="1"/>
</dbReference>
<name>DCDB_HYDS0</name>
<feature type="chain" id="PRO_1000096433" description="dCTP deaminase, dUMP-forming">
    <location>
        <begin position="1"/>
        <end position="177"/>
    </location>
</feature>
<feature type="active site" description="Proton donor/acceptor" evidence="1">
    <location>
        <position position="122"/>
    </location>
</feature>
<feature type="binding site" evidence="1">
    <location>
        <begin position="95"/>
        <end position="100"/>
    </location>
    <ligand>
        <name>dCTP</name>
        <dbReference type="ChEBI" id="CHEBI:61481"/>
    </ligand>
</feature>
<feature type="binding site" evidence="1">
    <location>
        <position position="112"/>
    </location>
    <ligand>
        <name>dCTP</name>
        <dbReference type="ChEBI" id="CHEBI:61481"/>
    </ligand>
</feature>
<feature type="binding site" evidence="1">
    <location>
        <begin position="120"/>
        <end position="122"/>
    </location>
    <ligand>
        <name>dCTP</name>
        <dbReference type="ChEBI" id="CHEBI:61481"/>
    </ligand>
</feature>
<feature type="binding site" evidence="1">
    <location>
        <position position="141"/>
    </location>
    <ligand>
        <name>dCTP</name>
        <dbReference type="ChEBI" id="CHEBI:61481"/>
    </ligand>
</feature>
<feature type="binding site" evidence="1">
    <location>
        <position position="155"/>
    </location>
    <ligand>
        <name>dCTP</name>
        <dbReference type="ChEBI" id="CHEBI:61481"/>
    </ligand>
</feature>
<feature type="binding site" evidence="1">
    <location>
        <position position="162"/>
    </location>
    <ligand>
        <name>dCTP</name>
        <dbReference type="ChEBI" id="CHEBI:61481"/>
    </ligand>
</feature>
<feature type="site" description="Important for bifunctional activity" evidence="1">
    <location>
        <begin position="109"/>
        <end position="110"/>
    </location>
</feature>